<gene>
    <name evidence="1" type="primary">rhaD</name>
    <name type="ordered locus">YpAngola_A0745</name>
</gene>
<feature type="chain" id="PRO_1000193739" description="Rhamnulose-1-phosphate aldolase">
    <location>
        <begin position="1"/>
        <end position="274"/>
    </location>
</feature>
<feature type="active site" evidence="1">
    <location>
        <position position="117"/>
    </location>
</feature>
<feature type="binding site" evidence="1">
    <location>
        <position position="141"/>
    </location>
    <ligand>
        <name>Zn(2+)</name>
        <dbReference type="ChEBI" id="CHEBI:29105"/>
    </ligand>
</feature>
<feature type="binding site" evidence="1">
    <location>
        <position position="143"/>
    </location>
    <ligand>
        <name>Zn(2+)</name>
        <dbReference type="ChEBI" id="CHEBI:29105"/>
    </ligand>
</feature>
<feature type="binding site" evidence="1">
    <location>
        <position position="212"/>
    </location>
    <ligand>
        <name>Zn(2+)</name>
        <dbReference type="ChEBI" id="CHEBI:29105"/>
    </ligand>
</feature>
<proteinExistence type="inferred from homology"/>
<keyword id="KW-0963">Cytoplasm</keyword>
<keyword id="KW-0456">Lyase</keyword>
<keyword id="KW-0479">Metal-binding</keyword>
<keyword id="KW-0684">Rhamnose metabolism</keyword>
<keyword id="KW-0862">Zinc</keyword>
<evidence type="ECO:0000255" key="1">
    <source>
        <dbReference type="HAMAP-Rule" id="MF_00770"/>
    </source>
</evidence>
<sequence length="274" mass="30352">MQAILSSWFIQGMIKATSDMWHKGWDERNGGNISLRLLAEEVEPYRRDFYQQPRKVELTQPAPELANSWFLVTGSGKFFRNVELNPAENLVLLQVSNDGMAYHIHWGLTQGGLPTSELAAHFQSHIVRMQVSGGTNRVIMHCHATNLIALSYVQKLENASFTRLLWEGSTECLVVFPDGIGIVPWMVPGTDGIGTQTAEQMREHSLVLWPFHGIFGSGPTLDDAFGLIDTAEKSAEIMVKVLSMGGKKQTISREQLIALAARFDVTPMAAALDA</sequence>
<reference key="1">
    <citation type="journal article" date="2010" name="J. Bacteriol.">
        <title>Genome sequence of the deep-rooted Yersinia pestis strain Angola reveals new insights into the evolution and pangenome of the plague bacterium.</title>
        <authorList>
            <person name="Eppinger M."/>
            <person name="Worsham P.L."/>
            <person name="Nikolich M.P."/>
            <person name="Riley D.R."/>
            <person name="Sebastian Y."/>
            <person name="Mou S."/>
            <person name="Achtman M."/>
            <person name="Lindler L.E."/>
            <person name="Ravel J."/>
        </authorList>
    </citation>
    <scope>NUCLEOTIDE SEQUENCE [LARGE SCALE GENOMIC DNA]</scope>
    <source>
        <strain>Angola</strain>
    </source>
</reference>
<accession>A9QYS3</accession>
<dbReference type="EC" id="4.1.2.19" evidence="1"/>
<dbReference type="EMBL" id="CP000901">
    <property type="protein sequence ID" value="ABX85270.1"/>
    <property type="molecule type" value="Genomic_DNA"/>
</dbReference>
<dbReference type="RefSeq" id="WP_002209103.1">
    <property type="nucleotide sequence ID" value="NZ_CP009935.1"/>
</dbReference>
<dbReference type="SMR" id="A9QYS3"/>
<dbReference type="GeneID" id="57974277"/>
<dbReference type="KEGG" id="ypg:YpAngola_A0745"/>
<dbReference type="PATRIC" id="fig|349746.12.peg.1693"/>
<dbReference type="UniPathway" id="UPA00541">
    <property type="reaction ID" value="UER00603"/>
</dbReference>
<dbReference type="GO" id="GO:0005829">
    <property type="term" value="C:cytosol"/>
    <property type="evidence" value="ECO:0007669"/>
    <property type="project" value="TreeGrafter"/>
</dbReference>
<dbReference type="GO" id="GO:0046872">
    <property type="term" value="F:metal ion binding"/>
    <property type="evidence" value="ECO:0007669"/>
    <property type="project" value="UniProtKB-KW"/>
</dbReference>
<dbReference type="GO" id="GO:0008994">
    <property type="term" value="F:rhamnulose-1-phosphate aldolase activity"/>
    <property type="evidence" value="ECO:0007669"/>
    <property type="project" value="UniProtKB-UniRule"/>
</dbReference>
<dbReference type="GO" id="GO:0019323">
    <property type="term" value="P:pentose catabolic process"/>
    <property type="evidence" value="ECO:0007669"/>
    <property type="project" value="TreeGrafter"/>
</dbReference>
<dbReference type="GO" id="GO:0019301">
    <property type="term" value="P:rhamnose catabolic process"/>
    <property type="evidence" value="ECO:0007669"/>
    <property type="project" value="UniProtKB-UniRule"/>
</dbReference>
<dbReference type="CDD" id="cd00398">
    <property type="entry name" value="Aldolase_II"/>
    <property type="match status" value="1"/>
</dbReference>
<dbReference type="FunFam" id="3.40.225.10:FF:000006">
    <property type="entry name" value="Rhamnulose-1-phosphate aldolase"/>
    <property type="match status" value="1"/>
</dbReference>
<dbReference type="Gene3D" id="3.40.225.10">
    <property type="entry name" value="Class II aldolase/adducin N-terminal domain"/>
    <property type="match status" value="1"/>
</dbReference>
<dbReference type="HAMAP" id="MF_00770">
    <property type="entry name" value="RhaD"/>
    <property type="match status" value="1"/>
</dbReference>
<dbReference type="InterPro" id="IPR050197">
    <property type="entry name" value="Aldolase_class_II_sugar_metab"/>
</dbReference>
<dbReference type="InterPro" id="IPR001303">
    <property type="entry name" value="Aldolase_II/adducin_N"/>
</dbReference>
<dbReference type="InterPro" id="IPR036409">
    <property type="entry name" value="Aldolase_II/adducin_N_sf"/>
</dbReference>
<dbReference type="InterPro" id="IPR013447">
    <property type="entry name" value="Rhamnulose-1-P_Aldolase"/>
</dbReference>
<dbReference type="NCBIfam" id="NF002963">
    <property type="entry name" value="PRK03634.1"/>
    <property type="match status" value="1"/>
</dbReference>
<dbReference type="NCBIfam" id="TIGR02624">
    <property type="entry name" value="rhamnu_1P_ald"/>
    <property type="match status" value="1"/>
</dbReference>
<dbReference type="PANTHER" id="PTHR22789">
    <property type="entry name" value="FUCULOSE PHOSPHATE ALDOLASE"/>
    <property type="match status" value="1"/>
</dbReference>
<dbReference type="PANTHER" id="PTHR22789:SF16">
    <property type="entry name" value="RHAMNULOSE-1-PHOSPHATE ALDOLASE"/>
    <property type="match status" value="1"/>
</dbReference>
<dbReference type="Pfam" id="PF00596">
    <property type="entry name" value="Aldolase_II"/>
    <property type="match status" value="1"/>
</dbReference>
<dbReference type="SMART" id="SM01007">
    <property type="entry name" value="Aldolase_II"/>
    <property type="match status" value="1"/>
</dbReference>
<dbReference type="SUPFAM" id="SSF53639">
    <property type="entry name" value="AraD/HMP-PK domain-like"/>
    <property type="match status" value="1"/>
</dbReference>
<protein>
    <recommendedName>
        <fullName evidence="1">Rhamnulose-1-phosphate aldolase</fullName>
        <ecNumber evidence="1">4.1.2.19</ecNumber>
    </recommendedName>
</protein>
<organism>
    <name type="scientific">Yersinia pestis bv. Antiqua (strain Angola)</name>
    <dbReference type="NCBI Taxonomy" id="349746"/>
    <lineage>
        <taxon>Bacteria</taxon>
        <taxon>Pseudomonadati</taxon>
        <taxon>Pseudomonadota</taxon>
        <taxon>Gammaproteobacteria</taxon>
        <taxon>Enterobacterales</taxon>
        <taxon>Yersiniaceae</taxon>
        <taxon>Yersinia</taxon>
    </lineage>
</organism>
<name>RHAD_YERPG</name>
<comment type="function">
    <text evidence="1">Catalyzes the reversible cleavage of L-rhamnulose-1-phosphate to dihydroxyacetone phosphate (DHAP) and L-lactaldehyde.</text>
</comment>
<comment type="catalytic activity">
    <reaction evidence="1">
        <text>L-rhamnulose 1-phosphate = (S)-lactaldehyde + dihydroxyacetone phosphate</text>
        <dbReference type="Rhea" id="RHEA:19689"/>
        <dbReference type="ChEBI" id="CHEBI:18041"/>
        <dbReference type="ChEBI" id="CHEBI:57642"/>
        <dbReference type="ChEBI" id="CHEBI:58313"/>
        <dbReference type="EC" id="4.1.2.19"/>
    </reaction>
</comment>
<comment type="cofactor">
    <cofactor evidence="1">
        <name>Zn(2+)</name>
        <dbReference type="ChEBI" id="CHEBI:29105"/>
    </cofactor>
    <text evidence="1">Binds 1 zinc ion per subunit.</text>
</comment>
<comment type="pathway">
    <text evidence="1">Carbohydrate degradation; L-rhamnose degradation; glycerone phosphate from L-rhamnose: step 3/3.</text>
</comment>
<comment type="subunit">
    <text evidence="1">Homotetramer.</text>
</comment>
<comment type="subcellular location">
    <subcellularLocation>
        <location evidence="1">Cytoplasm</location>
    </subcellularLocation>
</comment>
<comment type="similarity">
    <text evidence="1">Belongs to the aldolase class II family. RhaD subfamily.</text>
</comment>